<keyword id="KW-0276">Fatty acid metabolism</keyword>
<keyword id="KW-0436">Ligase</keyword>
<keyword id="KW-0443">Lipid metabolism</keyword>
<keyword id="KW-0576">Peroxisome</keyword>
<keyword id="KW-1185">Reference proteome</keyword>
<sequence length="578" mass="64725">MDNLALCEANNVPLTPITFLKRASECYPNRTSIIYGKTRFTWPQTYDRCCRLAASLISLNIGKNDVVSVVAPNTPAMYEMHFAVPMAGAVLNPINTRLDATSIAAILRHAKPKILFIYRSFEPLAREILQLLSSEDSNLNLPVIFIHEIDFPKRVSSEESDYECLIQRGEPTPLLLARMFCIQDEHDPISLNYTSGTTADPKGVVISHRGAYLSTLSAIIGWEMGTCPVYLWTLPMFHCNGWTFTWGTAARGGTSVCMRHVTAPEIYKNIEMHNVTHMCCVPTVFNILLKGNSLDLSHRSGPVHVLTGGSPPPAALVKKVQRLGFQVMHAYGLTEATGPVLFCEWQDEWNRLPENQQMELKARQGLSILGLTEVDVRNKETQESVPRDGKTMGEIVMKGSSIMKGYLKNPKATYEAFKHGWLNSGDVGVIHPDGHVEIKDRSKDIIISGGENISSVEVENIIYKYPKVLETAVVAMPHPTWGETPCAFVVLEKGETNNEDREDKLVTKERDLIEYCRENLPHFMCPRKVVFLDELPKNGNGKILKPKLRDIAKGLVAEDEVNVRSKVQRPVEHFTSRL</sequence>
<organism>
    <name type="scientific">Arabidopsis thaliana</name>
    <name type="common">Mouse-ear cress</name>
    <dbReference type="NCBI Taxonomy" id="3702"/>
    <lineage>
        <taxon>Eukaryota</taxon>
        <taxon>Viridiplantae</taxon>
        <taxon>Streptophyta</taxon>
        <taxon>Embryophyta</taxon>
        <taxon>Tracheophyta</taxon>
        <taxon>Spermatophyta</taxon>
        <taxon>Magnoliopsida</taxon>
        <taxon>eudicotyledons</taxon>
        <taxon>Gunneridae</taxon>
        <taxon>Pentapetalae</taxon>
        <taxon>rosids</taxon>
        <taxon>malvids</taxon>
        <taxon>Brassicales</taxon>
        <taxon>Brassicaceae</taxon>
        <taxon>Camelineae</taxon>
        <taxon>Arabidopsis</taxon>
    </lineage>
</organism>
<gene>
    <name type="primary">AAE12</name>
    <name type="ordered locus">At1g65890</name>
    <name type="ORF">F12P19.6</name>
</gene>
<reference key="1">
    <citation type="journal article" date="2003" name="Plant Physiol.">
        <title>Arabidopsis contains a large superfamily of acyl-activating enzymes. Phylogenetic and biochemical analysis reveals a new class of acyl-coenzyme a synthetases.</title>
        <authorList>
            <person name="Shockey J.M."/>
            <person name="Fulda M.S."/>
            <person name="Browse J."/>
        </authorList>
    </citation>
    <scope>NUCLEOTIDE SEQUENCE [MRNA]</scope>
    <scope>TISSUE SPECIFICITY</scope>
    <scope>GENE FAMILY</scope>
    <scope>NOMENCLATURE</scope>
    <source>
        <strain>cv. Wassilewskija</strain>
    </source>
</reference>
<reference key="2">
    <citation type="journal article" date="2000" name="Nature">
        <title>Sequence and analysis of chromosome 1 of the plant Arabidopsis thaliana.</title>
        <authorList>
            <person name="Theologis A."/>
            <person name="Ecker J.R."/>
            <person name="Palm C.J."/>
            <person name="Federspiel N.A."/>
            <person name="Kaul S."/>
            <person name="White O."/>
            <person name="Alonso J."/>
            <person name="Altafi H."/>
            <person name="Araujo R."/>
            <person name="Bowman C.L."/>
            <person name="Brooks S.Y."/>
            <person name="Buehler E."/>
            <person name="Chan A."/>
            <person name="Chao Q."/>
            <person name="Chen H."/>
            <person name="Cheuk R.F."/>
            <person name="Chin C.W."/>
            <person name="Chung M.K."/>
            <person name="Conn L."/>
            <person name="Conway A.B."/>
            <person name="Conway A.R."/>
            <person name="Creasy T.H."/>
            <person name="Dewar K."/>
            <person name="Dunn P."/>
            <person name="Etgu P."/>
            <person name="Feldblyum T.V."/>
            <person name="Feng J.-D."/>
            <person name="Fong B."/>
            <person name="Fujii C.Y."/>
            <person name="Gill J.E."/>
            <person name="Goldsmith A.D."/>
            <person name="Haas B."/>
            <person name="Hansen N.F."/>
            <person name="Hughes B."/>
            <person name="Huizar L."/>
            <person name="Hunter J.L."/>
            <person name="Jenkins J."/>
            <person name="Johnson-Hopson C."/>
            <person name="Khan S."/>
            <person name="Khaykin E."/>
            <person name="Kim C.J."/>
            <person name="Koo H.L."/>
            <person name="Kremenetskaia I."/>
            <person name="Kurtz D.B."/>
            <person name="Kwan A."/>
            <person name="Lam B."/>
            <person name="Langin-Hooper S."/>
            <person name="Lee A."/>
            <person name="Lee J.M."/>
            <person name="Lenz C.A."/>
            <person name="Li J.H."/>
            <person name="Li Y.-P."/>
            <person name="Lin X."/>
            <person name="Liu S.X."/>
            <person name="Liu Z.A."/>
            <person name="Luros J.S."/>
            <person name="Maiti R."/>
            <person name="Marziali A."/>
            <person name="Militscher J."/>
            <person name="Miranda M."/>
            <person name="Nguyen M."/>
            <person name="Nierman W.C."/>
            <person name="Osborne B.I."/>
            <person name="Pai G."/>
            <person name="Peterson J."/>
            <person name="Pham P.K."/>
            <person name="Rizzo M."/>
            <person name="Rooney T."/>
            <person name="Rowley D."/>
            <person name="Sakano H."/>
            <person name="Salzberg S.L."/>
            <person name="Schwartz J.R."/>
            <person name="Shinn P."/>
            <person name="Southwick A.M."/>
            <person name="Sun H."/>
            <person name="Tallon L.J."/>
            <person name="Tambunga G."/>
            <person name="Toriumi M.J."/>
            <person name="Town C.D."/>
            <person name="Utterback T."/>
            <person name="Van Aken S."/>
            <person name="Vaysberg M."/>
            <person name="Vysotskaia V.S."/>
            <person name="Walker M."/>
            <person name="Wu D."/>
            <person name="Yu G."/>
            <person name="Fraser C.M."/>
            <person name="Venter J.C."/>
            <person name="Davis R.W."/>
        </authorList>
    </citation>
    <scope>NUCLEOTIDE SEQUENCE [LARGE SCALE GENOMIC DNA]</scope>
    <source>
        <strain>cv. Columbia</strain>
    </source>
</reference>
<reference key="3">
    <citation type="journal article" date="2017" name="Plant J.">
        <title>Araport11: a complete reannotation of the Arabidopsis thaliana reference genome.</title>
        <authorList>
            <person name="Cheng C.Y."/>
            <person name="Krishnakumar V."/>
            <person name="Chan A.P."/>
            <person name="Thibaud-Nissen F."/>
            <person name="Schobel S."/>
            <person name="Town C.D."/>
        </authorList>
    </citation>
    <scope>GENOME REANNOTATION</scope>
    <source>
        <strain>cv. Columbia</strain>
    </source>
</reference>
<reference key="4">
    <citation type="journal article" date="2003" name="Science">
        <title>Empirical analysis of transcriptional activity in the Arabidopsis genome.</title>
        <authorList>
            <person name="Yamada K."/>
            <person name="Lim J."/>
            <person name="Dale J.M."/>
            <person name="Chen H."/>
            <person name="Shinn P."/>
            <person name="Palm C.J."/>
            <person name="Southwick A.M."/>
            <person name="Wu H.C."/>
            <person name="Kim C.J."/>
            <person name="Nguyen M."/>
            <person name="Pham P.K."/>
            <person name="Cheuk R.F."/>
            <person name="Karlin-Newmann G."/>
            <person name="Liu S.X."/>
            <person name="Lam B."/>
            <person name="Sakano H."/>
            <person name="Wu T."/>
            <person name="Yu G."/>
            <person name="Miranda M."/>
            <person name="Quach H.L."/>
            <person name="Tripp M."/>
            <person name="Chang C.H."/>
            <person name="Lee J.M."/>
            <person name="Toriumi M.J."/>
            <person name="Chan M.M."/>
            <person name="Tang C.C."/>
            <person name="Onodera C.S."/>
            <person name="Deng J.M."/>
            <person name="Akiyama K."/>
            <person name="Ansari Y."/>
            <person name="Arakawa T."/>
            <person name="Banh J."/>
            <person name="Banno F."/>
            <person name="Bowser L."/>
            <person name="Brooks S.Y."/>
            <person name="Carninci P."/>
            <person name="Chao Q."/>
            <person name="Choy N."/>
            <person name="Enju A."/>
            <person name="Goldsmith A.D."/>
            <person name="Gurjal M."/>
            <person name="Hansen N.F."/>
            <person name="Hayashizaki Y."/>
            <person name="Johnson-Hopson C."/>
            <person name="Hsuan V.W."/>
            <person name="Iida K."/>
            <person name="Karnes M."/>
            <person name="Khan S."/>
            <person name="Koesema E."/>
            <person name="Ishida J."/>
            <person name="Jiang P.X."/>
            <person name="Jones T."/>
            <person name="Kawai J."/>
            <person name="Kamiya A."/>
            <person name="Meyers C."/>
            <person name="Nakajima M."/>
            <person name="Narusaka M."/>
            <person name="Seki M."/>
            <person name="Sakurai T."/>
            <person name="Satou M."/>
            <person name="Tamse R."/>
            <person name="Vaysberg M."/>
            <person name="Wallender E.K."/>
            <person name="Wong C."/>
            <person name="Yamamura Y."/>
            <person name="Yuan S."/>
            <person name="Shinozaki K."/>
            <person name="Davis R.W."/>
            <person name="Theologis A."/>
            <person name="Ecker J.R."/>
        </authorList>
    </citation>
    <scope>NUCLEOTIDE SEQUENCE [LARGE SCALE MRNA]</scope>
    <source>
        <strain>cv. Columbia</strain>
    </source>
</reference>
<accession>Q9SS00</accession>
<accession>Q84P20</accession>
<accession>Q94A35</accession>
<dbReference type="EC" id="6.2.1.-"/>
<dbReference type="EMBL" id="AY250840">
    <property type="protein sequence ID" value="AAP03023.1"/>
    <property type="molecule type" value="mRNA"/>
</dbReference>
<dbReference type="EMBL" id="AC009513">
    <property type="protein sequence ID" value="AAF06050.1"/>
    <property type="molecule type" value="Genomic_DNA"/>
</dbReference>
<dbReference type="EMBL" id="CP002684">
    <property type="protein sequence ID" value="AEE34437.1"/>
    <property type="molecule type" value="Genomic_DNA"/>
</dbReference>
<dbReference type="EMBL" id="AY050412">
    <property type="protein sequence ID" value="AAK91428.1"/>
    <property type="molecule type" value="mRNA"/>
</dbReference>
<dbReference type="EMBL" id="AY059657">
    <property type="protein sequence ID" value="AAL31150.1"/>
    <property type="molecule type" value="mRNA"/>
</dbReference>
<dbReference type="PIR" id="B96683">
    <property type="entry name" value="B96683"/>
</dbReference>
<dbReference type="RefSeq" id="NP_176764.1">
    <property type="nucleotide sequence ID" value="NM_105261.2"/>
</dbReference>
<dbReference type="SMR" id="Q9SS00"/>
<dbReference type="FunCoup" id="Q9SS00">
    <property type="interactions" value="125"/>
</dbReference>
<dbReference type="STRING" id="3702.Q9SS00"/>
<dbReference type="GlyGen" id="Q9SS00">
    <property type="glycosylation" value="1 site"/>
</dbReference>
<dbReference type="PaxDb" id="3702-AT1G65890.1"/>
<dbReference type="ProteomicsDB" id="243268"/>
<dbReference type="EnsemblPlants" id="AT1G65890.1">
    <property type="protein sequence ID" value="AT1G65890.1"/>
    <property type="gene ID" value="AT1G65890"/>
</dbReference>
<dbReference type="GeneID" id="842901"/>
<dbReference type="Gramene" id="AT1G65890.1">
    <property type="protein sequence ID" value="AT1G65890.1"/>
    <property type="gene ID" value="AT1G65890"/>
</dbReference>
<dbReference type="KEGG" id="ath:AT1G65890"/>
<dbReference type="Araport" id="AT1G65890"/>
<dbReference type="TAIR" id="AT1G65890">
    <property type="gene designation" value="AAE12"/>
</dbReference>
<dbReference type="eggNOG" id="KOG1176">
    <property type="taxonomic scope" value="Eukaryota"/>
</dbReference>
<dbReference type="HOGENOM" id="CLU_000022_59_5_1"/>
<dbReference type="InParanoid" id="Q9SS00"/>
<dbReference type="OMA" id="VIMGWEM"/>
<dbReference type="PhylomeDB" id="Q9SS00"/>
<dbReference type="BioCyc" id="ARA:AT1G65890-MONOMER"/>
<dbReference type="PRO" id="PR:Q9SS00"/>
<dbReference type="Proteomes" id="UP000006548">
    <property type="component" value="Chromosome 1"/>
</dbReference>
<dbReference type="ExpressionAtlas" id="Q9SS00">
    <property type="expression patterns" value="baseline and differential"/>
</dbReference>
<dbReference type="GO" id="GO:0005777">
    <property type="term" value="C:peroxisome"/>
    <property type="evidence" value="ECO:0007669"/>
    <property type="project" value="UniProtKB-SubCell"/>
</dbReference>
<dbReference type="GO" id="GO:0016874">
    <property type="term" value="F:ligase activity"/>
    <property type="evidence" value="ECO:0007669"/>
    <property type="project" value="UniProtKB-KW"/>
</dbReference>
<dbReference type="GO" id="GO:0006631">
    <property type="term" value="P:fatty acid metabolic process"/>
    <property type="evidence" value="ECO:0007669"/>
    <property type="project" value="UniProtKB-KW"/>
</dbReference>
<dbReference type="CDD" id="cd12118">
    <property type="entry name" value="ttLC_FACS_AEE21_like"/>
    <property type="match status" value="1"/>
</dbReference>
<dbReference type="FunFam" id="3.30.300.30:FF:000008">
    <property type="entry name" value="2,3-dihydroxybenzoate-AMP ligase"/>
    <property type="match status" value="1"/>
</dbReference>
<dbReference type="FunFam" id="3.40.50.12780:FF:000003">
    <property type="entry name" value="Long-chain-fatty-acid--CoA ligase FadD"/>
    <property type="match status" value="1"/>
</dbReference>
<dbReference type="Gene3D" id="3.30.300.30">
    <property type="match status" value="1"/>
</dbReference>
<dbReference type="Gene3D" id="3.40.50.12780">
    <property type="entry name" value="N-terminal domain of ligase-like"/>
    <property type="match status" value="1"/>
</dbReference>
<dbReference type="InterPro" id="IPR025110">
    <property type="entry name" value="AMP-bd_C"/>
</dbReference>
<dbReference type="InterPro" id="IPR045851">
    <property type="entry name" value="AMP-bd_C_sf"/>
</dbReference>
<dbReference type="InterPro" id="IPR000873">
    <property type="entry name" value="AMP-dep_synth/lig_dom"/>
</dbReference>
<dbReference type="InterPro" id="IPR042099">
    <property type="entry name" value="ANL_N_sf"/>
</dbReference>
<dbReference type="NCBIfam" id="NF006020">
    <property type="entry name" value="PRK08162.1"/>
    <property type="match status" value="1"/>
</dbReference>
<dbReference type="PANTHER" id="PTHR43859">
    <property type="entry name" value="ACYL-ACTIVATING ENZYME"/>
    <property type="match status" value="1"/>
</dbReference>
<dbReference type="PANTHER" id="PTHR43859:SF25">
    <property type="entry name" value="BENZOATE--COA LIGASE, PEROXISOMAL-RELATED"/>
    <property type="match status" value="1"/>
</dbReference>
<dbReference type="Pfam" id="PF00501">
    <property type="entry name" value="AMP-binding"/>
    <property type="match status" value="1"/>
</dbReference>
<dbReference type="Pfam" id="PF13193">
    <property type="entry name" value="AMP-binding_C"/>
    <property type="match status" value="1"/>
</dbReference>
<dbReference type="SUPFAM" id="SSF56801">
    <property type="entry name" value="Acetyl-CoA synthetase-like"/>
    <property type="match status" value="1"/>
</dbReference>
<comment type="function">
    <text evidence="1">May act as an acid--thiol ligase that activates carboxylic acids by forming acyl-CoAs.</text>
</comment>
<comment type="subcellular location">
    <subcellularLocation>
        <location evidence="4">Peroxisome</location>
    </subcellularLocation>
</comment>
<comment type="tissue specificity">
    <text evidence="3">Expressed at low levels in leaves.</text>
</comment>
<comment type="similarity">
    <text evidence="4">Belongs to the ATP-dependent AMP-binding enzyme family.</text>
</comment>
<protein>
    <recommendedName>
        <fullName>Probable acyl-activating enzyme 12, peroxisomal</fullName>
        <ecNumber>6.2.1.-</ecNumber>
    </recommendedName>
</protein>
<name>AAE12_ARATH</name>
<proteinExistence type="evidence at transcript level"/>
<feature type="chain" id="PRO_0000415723" description="Probable acyl-activating enzyme 12, peroxisomal">
    <location>
        <begin position="1"/>
        <end position="578"/>
    </location>
</feature>
<feature type="short sequence motif" description="Microbody targeting signal" evidence="2">
    <location>
        <begin position="576"/>
        <end position="578"/>
    </location>
</feature>
<feature type="sequence conflict" description="In Ref. 1; AAP03023." evidence="4" ref="1">
    <original>Y</original>
    <variation>D</variation>
    <location>
        <position position="118"/>
    </location>
</feature>
<feature type="sequence conflict" description="In Ref. 1; AAP03023." evidence="4" ref="1">
    <original>L</original>
    <variation>S</variation>
    <location>
        <position position="174"/>
    </location>
</feature>
<feature type="sequence conflict" description="In Ref. 4; AAK91428/AAL31150." evidence="4" ref="4">
    <original>H</original>
    <variation>Y</variation>
    <location>
        <position position="478"/>
    </location>
</feature>
<evidence type="ECO:0000250" key="1"/>
<evidence type="ECO:0000255" key="2"/>
<evidence type="ECO:0000269" key="3">
    <source>
    </source>
</evidence>
<evidence type="ECO:0000305" key="4"/>